<proteinExistence type="inferred from homology"/>
<reference key="1">
    <citation type="submission" date="2008-08" db="EMBL/GenBank/DDBJ databases">
        <title>Complete sequence of Anaeromyxobacter sp. K.</title>
        <authorList>
            <consortium name="US DOE Joint Genome Institute"/>
            <person name="Lucas S."/>
            <person name="Copeland A."/>
            <person name="Lapidus A."/>
            <person name="Glavina del Rio T."/>
            <person name="Dalin E."/>
            <person name="Tice H."/>
            <person name="Bruce D."/>
            <person name="Goodwin L."/>
            <person name="Pitluck S."/>
            <person name="Saunders E."/>
            <person name="Brettin T."/>
            <person name="Detter J.C."/>
            <person name="Han C."/>
            <person name="Larimer F."/>
            <person name="Land M."/>
            <person name="Hauser L."/>
            <person name="Kyrpides N."/>
            <person name="Ovchinnikiva G."/>
            <person name="Beliaev A."/>
        </authorList>
    </citation>
    <scope>NUCLEOTIDE SEQUENCE [LARGE SCALE GENOMIC DNA]</scope>
    <source>
        <strain>K</strain>
    </source>
</reference>
<comment type="function">
    <text evidence="1">Binds to the 23S rRNA.</text>
</comment>
<comment type="similarity">
    <text evidence="1">Belongs to the bacterial ribosomal protein bL9 family.</text>
</comment>
<organism>
    <name type="scientific">Anaeromyxobacter sp. (strain K)</name>
    <dbReference type="NCBI Taxonomy" id="447217"/>
    <lineage>
        <taxon>Bacteria</taxon>
        <taxon>Pseudomonadati</taxon>
        <taxon>Myxococcota</taxon>
        <taxon>Myxococcia</taxon>
        <taxon>Myxococcales</taxon>
        <taxon>Cystobacterineae</taxon>
        <taxon>Anaeromyxobacteraceae</taxon>
        <taxon>Anaeromyxobacter</taxon>
    </lineage>
</organism>
<accession>B4ULB9</accession>
<evidence type="ECO:0000255" key="1">
    <source>
        <dbReference type="HAMAP-Rule" id="MF_00503"/>
    </source>
</evidence>
<evidence type="ECO:0000305" key="2"/>
<protein>
    <recommendedName>
        <fullName evidence="1">Large ribosomal subunit protein bL9</fullName>
    </recommendedName>
    <alternativeName>
        <fullName evidence="2">50S ribosomal protein L9</fullName>
    </alternativeName>
</protein>
<name>RL9_ANASK</name>
<feature type="chain" id="PRO_1000126861" description="Large ribosomal subunit protein bL9">
    <location>
        <begin position="1"/>
        <end position="149"/>
    </location>
</feature>
<keyword id="KW-0687">Ribonucleoprotein</keyword>
<keyword id="KW-0689">Ribosomal protein</keyword>
<keyword id="KW-0694">RNA-binding</keyword>
<keyword id="KW-0699">rRNA-binding</keyword>
<dbReference type="EMBL" id="CP001131">
    <property type="protein sequence ID" value="ACG71366.1"/>
    <property type="molecule type" value="Genomic_DNA"/>
</dbReference>
<dbReference type="RefSeq" id="WP_012524202.1">
    <property type="nucleotide sequence ID" value="NC_011145.1"/>
</dbReference>
<dbReference type="SMR" id="B4ULB9"/>
<dbReference type="KEGG" id="ank:AnaeK_0123"/>
<dbReference type="HOGENOM" id="CLU_078938_3_0_7"/>
<dbReference type="OrthoDB" id="9788336at2"/>
<dbReference type="Proteomes" id="UP000001871">
    <property type="component" value="Chromosome"/>
</dbReference>
<dbReference type="GO" id="GO:1990904">
    <property type="term" value="C:ribonucleoprotein complex"/>
    <property type="evidence" value="ECO:0007669"/>
    <property type="project" value="UniProtKB-KW"/>
</dbReference>
<dbReference type="GO" id="GO:0005840">
    <property type="term" value="C:ribosome"/>
    <property type="evidence" value="ECO:0007669"/>
    <property type="project" value="UniProtKB-KW"/>
</dbReference>
<dbReference type="GO" id="GO:0019843">
    <property type="term" value="F:rRNA binding"/>
    <property type="evidence" value="ECO:0007669"/>
    <property type="project" value="UniProtKB-UniRule"/>
</dbReference>
<dbReference type="GO" id="GO:0003735">
    <property type="term" value="F:structural constituent of ribosome"/>
    <property type="evidence" value="ECO:0007669"/>
    <property type="project" value="InterPro"/>
</dbReference>
<dbReference type="GO" id="GO:0006412">
    <property type="term" value="P:translation"/>
    <property type="evidence" value="ECO:0007669"/>
    <property type="project" value="UniProtKB-UniRule"/>
</dbReference>
<dbReference type="FunFam" id="3.10.430.100:FF:000006">
    <property type="entry name" value="50S ribosomal protein L9"/>
    <property type="match status" value="1"/>
</dbReference>
<dbReference type="FunFam" id="3.40.5.10:FF:000003">
    <property type="entry name" value="50S ribosomal protein L9"/>
    <property type="match status" value="1"/>
</dbReference>
<dbReference type="Gene3D" id="3.10.430.100">
    <property type="entry name" value="Ribosomal protein L9, C-terminal domain"/>
    <property type="match status" value="1"/>
</dbReference>
<dbReference type="Gene3D" id="3.40.5.10">
    <property type="entry name" value="Ribosomal protein L9, N-terminal domain"/>
    <property type="match status" value="1"/>
</dbReference>
<dbReference type="HAMAP" id="MF_00503">
    <property type="entry name" value="Ribosomal_bL9"/>
    <property type="match status" value="1"/>
</dbReference>
<dbReference type="InterPro" id="IPR000244">
    <property type="entry name" value="Ribosomal_bL9"/>
</dbReference>
<dbReference type="InterPro" id="IPR009027">
    <property type="entry name" value="Ribosomal_bL9/RNase_H1_N"/>
</dbReference>
<dbReference type="InterPro" id="IPR020594">
    <property type="entry name" value="Ribosomal_bL9_bac/chp"/>
</dbReference>
<dbReference type="InterPro" id="IPR020069">
    <property type="entry name" value="Ribosomal_bL9_C"/>
</dbReference>
<dbReference type="InterPro" id="IPR036791">
    <property type="entry name" value="Ribosomal_bL9_C_sf"/>
</dbReference>
<dbReference type="InterPro" id="IPR020070">
    <property type="entry name" value="Ribosomal_bL9_N"/>
</dbReference>
<dbReference type="InterPro" id="IPR036935">
    <property type="entry name" value="Ribosomal_bL9_N_sf"/>
</dbReference>
<dbReference type="NCBIfam" id="TIGR00158">
    <property type="entry name" value="L9"/>
    <property type="match status" value="1"/>
</dbReference>
<dbReference type="PANTHER" id="PTHR21368">
    <property type="entry name" value="50S RIBOSOMAL PROTEIN L9"/>
    <property type="match status" value="1"/>
</dbReference>
<dbReference type="Pfam" id="PF03948">
    <property type="entry name" value="Ribosomal_L9_C"/>
    <property type="match status" value="1"/>
</dbReference>
<dbReference type="Pfam" id="PF01281">
    <property type="entry name" value="Ribosomal_L9_N"/>
    <property type="match status" value="1"/>
</dbReference>
<dbReference type="SUPFAM" id="SSF55658">
    <property type="entry name" value="L9 N-domain-like"/>
    <property type="match status" value="1"/>
</dbReference>
<dbReference type="SUPFAM" id="SSF55653">
    <property type="entry name" value="Ribosomal protein L9 C-domain"/>
    <property type="match status" value="1"/>
</dbReference>
<dbReference type="PROSITE" id="PS00651">
    <property type="entry name" value="RIBOSOMAL_L9"/>
    <property type="match status" value="1"/>
</dbReference>
<sequence length="149" mass="15975">MKLILREDVENLGKGGDLVDVKPGYGRNFLLPRGLAVTANPKNVKELEHQKAVAAAKAAKLKASAQAVAKRLSETPVTLKRKVGEQDKLYGSVTALDVAEALAARGVQLDRRSIVLDEPIKTVGEFEVPVKLHSEVAGKVKVTVEAEAE</sequence>
<gene>
    <name evidence="1" type="primary">rplI</name>
    <name type="ordered locus">AnaeK_0123</name>
</gene>